<feature type="chain" id="PRO_0000023129" description="Aspartate 1-decarboxylase beta chain" evidence="1">
    <location>
        <begin position="1"/>
        <end position="24"/>
    </location>
</feature>
<feature type="chain" id="PRO_0000023130" description="Aspartate 1-decarboxylase alpha chain" evidence="1">
    <location>
        <begin position="25"/>
        <end position="139"/>
    </location>
</feature>
<feature type="region of interest" description="Disordered" evidence="2">
    <location>
        <begin position="116"/>
        <end position="139"/>
    </location>
</feature>
<feature type="compositionally biased region" description="Polar residues" evidence="2">
    <location>
        <begin position="129"/>
        <end position="139"/>
    </location>
</feature>
<feature type="active site" description="Schiff-base intermediate with substrate; via pyruvic acid" evidence="1">
    <location>
        <position position="25"/>
    </location>
</feature>
<feature type="active site" description="Proton donor" evidence="1">
    <location>
        <position position="58"/>
    </location>
</feature>
<feature type="binding site" evidence="1">
    <location>
        <position position="57"/>
    </location>
    <ligand>
        <name>substrate</name>
    </ligand>
</feature>
<feature type="binding site" evidence="1">
    <location>
        <begin position="73"/>
        <end position="75"/>
    </location>
    <ligand>
        <name>substrate</name>
    </ligand>
</feature>
<feature type="modified residue" description="Pyruvic acid (Ser)" evidence="1">
    <location>
        <position position="25"/>
    </location>
</feature>
<evidence type="ECO:0000255" key="1">
    <source>
        <dbReference type="HAMAP-Rule" id="MF_00446"/>
    </source>
</evidence>
<evidence type="ECO:0000256" key="2">
    <source>
        <dbReference type="SAM" id="MobiDB-lite"/>
    </source>
</evidence>
<name>PAND_NOCFA</name>
<accession>Q5Z2U2</accession>
<protein>
    <recommendedName>
        <fullName evidence="1">Aspartate 1-decarboxylase</fullName>
        <ecNumber evidence="1">4.1.1.11</ecNumber>
    </recommendedName>
    <alternativeName>
        <fullName evidence="1">Aspartate alpha-decarboxylase</fullName>
    </alternativeName>
    <component>
        <recommendedName>
            <fullName evidence="1">Aspartate 1-decarboxylase beta chain</fullName>
        </recommendedName>
    </component>
    <component>
        <recommendedName>
            <fullName evidence="1">Aspartate 1-decarboxylase alpha chain</fullName>
        </recommendedName>
    </component>
</protein>
<organism>
    <name type="scientific">Nocardia farcinica (strain IFM 10152)</name>
    <dbReference type="NCBI Taxonomy" id="247156"/>
    <lineage>
        <taxon>Bacteria</taxon>
        <taxon>Bacillati</taxon>
        <taxon>Actinomycetota</taxon>
        <taxon>Actinomycetes</taxon>
        <taxon>Mycobacteriales</taxon>
        <taxon>Nocardiaceae</taxon>
        <taxon>Nocardia</taxon>
    </lineage>
</organism>
<comment type="function">
    <text evidence="1">Catalyzes the pyruvoyl-dependent decarboxylation of aspartate to produce beta-alanine.</text>
</comment>
<comment type="catalytic activity">
    <reaction evidence="1">
        <text>L-aspartate + H(+) = beta-alanine + CO2</text>
        <dbReference type="Rhea" id="RHEA:19497"/>
        <dbReference type="ChEBI" id="CHEBI:15378"/>
        <dbReference type="ChEBI" id="CHEBI:16526"/>
        <dbReference type="ChEBI" id="CHEBI:29991"/>
        <dbReference type="ChEBI" id="CHEBI:57966"/>
        <dbReference type="EC" id="4.1.1.11"/>
    </reaction>
</comment>
<comment type="cofactor">
    <cofactor evidence="1">
        <name>pyruvate</name>
        <dbReference type="ChEBI" id="CHEBI:15361"/>
    </cofactor>
    <text evidence="1">Binds 1 pyruvoyl group covalently per subunit.</text>
</comment>
<comment type="pathway">
    <text evidence="1">Cofactor biosynthesis; (R)-pantothenate biosynthesis; beta-alanine from L-aspartate: step 1/1.</text>
</comment>
<comment type="subunit">
    <text evidence="1">Heterooctamer of four alpha and four beta subunits.</text>
</comment>
<comment type="subcellular location">
    <subcellularLocation>
        <location evidence="1">Cytoplasm</location>
    </subcellularLocation>
</comment>
<comment type="PTM">
    <text evidence="1">Is synthesized initially as an inactive proenzyme, which is activated by self-cleavage at a specific serine bond to produce a beta-subunit with a hydroxyl group at its C-terminus and an alpha-subunit with a pyruvoyl group at its N-terminus.</text>
</comment>
<comment type="similarity">
    <text evidence="1">Belongs to the PanD family.</text>
</comment>
<keyword id="KW-0068">Autocatalytic cleavage</keyword>
<keyword id="KW-0963">Cytoplasm</keyword>
<keyword id="KW-0210">Decarboxylase</keyword>
<keyword id="KW-0456">Lyase</keyword>
<keyword id="KW-0566">Pantothenate biosynthesis</keyword>
<keyword id="KW-0670">Pyruvate</keyword>
<keyword id="KW-1185">Reference proteome</keyword>
<keyword id="KW-0704">Schiff base</keyword>
<keyword id="KW-0865">Zymogen</keyword>
<reference key="1">
    <citation type="journal article" date="2004" name="Proc. Natl. Acad. Sci. U.S.A.">
        <title>The complete genomic sequence of Nocardia farcinica IFM 10152.</title>
        <authorList>
            <person name="Ishikawa J."/>
            <person name="Yamashita A."/>
            <person name="Mikami Y."/>
            <person name="Hoshino Y."/>
            <person name="Kurita H."/>
            <person name="Hotta K."/>
            <person name="Shiba T."/>
            <person name="Hattori M."/>
        </authorList>
    </citation>
    <scope>NUCLEOTIDE SEQUENCE [LARGE SCALE GENOMIC DNA]</scope>
    <source>
        <strain>IFM 10152</strain>
    </source>
</reference>
<gene>
    <name evidence="1" type="primary">panD</name>
    <name type="ordered locus">NFA_4070</name>
</gene>
<proteinExistence type="inferred from homology"/>
<dbReference type="EC" id="4.1.1.11" evidence="1"/>
<dbReference type="EMBL" id="AP006618">
    <property type="protein sequence ID" value="BAD55249.1"/>
    <property type="molecule type" value="Genomic_DNA"/>
</dbReference>
<dbReference type="RefSeq" id="WP_011206936.1">
    <property type="nucleotide sequence ID" value="NC_006361.1"/>
</dbReference>
<dbReference type="SMR" id="Q5Z2U2"/>
<dbReference type="STRING" id="247156.NFA_4070"/>
<dbReference type="GeneID" id="61131245"/>
<dbReference type="KEGG" id="nfa:NFA_4070"/>
<dbReference type="eggNOG" id="COG0853">
    <property type="taxonomic scope" value="Bacteria"/>
</dbReference>
<dbReference type="HOGENOM" id="CLU_115305_2_0_11"/>
<dbReference type="OrthoDB" id="9803983at2"/>
<dbReference type="UniPathway" id="UPA00028">
    <property type="reaction ID" value="UER00002"/>
</dbReference>
<dbReference type="Proteomes" id="UP000006820">
    <property type="component" value="Chromosome"/>
</dbReference>
<dbReference type="GO" id="GO:0005829">
    <property type="term" value="C:cytosol"/>
    <property type="evidence" value="ECO:0007669"/>
    <property type="project" value="TreeGrafter"/>
</dbReference>
<dbReference type="GO" id="GO:0004068">
    <property type="term" value="F:aspartate 1-decarboxylase activity"/>
    <property type="evidence" value="ECO:0007669"/>
    <property type="project" value="UniProtKB-UniRule"/>
</dbReference>
<dbReference type="GO" id="GO:0006523">
    <property type="term" value="P:alanine biosynthetic process"/>
    <property type="evidence" value="ECO:0007669"/>
    <property type="project" value="InterPro"/>
</dbReference>
<dbReference type="GO" id="GO:0015940">
    <property type="term" value="P:pantothenate biosynthetic process"/>
    <property type="evidence" value="ECO:0007669"/>
    <property type="project" value="UniProtKB-UniRule"/>
</dbReference>
<dbReference type="CDD" id="cd06919">
    <property type="entry name" value="Asp_decarbox"/>
    <property type="match status" value="1"/>
</dbReference>
<dbReference type="Gene3D" id="2.40.40.20">
    <property type="match status" value="1"/>
</dbReference>
<dbReference type="HAMAP" id="MF_00446">
    <property type="entry name" value="PanD"/>
    <property type="match status" value="1"/>
</dbReference>
<dbReference type="InterPro" id="IPR009010">
    <property type="entry name" value="Asp_de-COase-like_dom_sf"/>
</dbReference>
<dbReference type="InterPro" id="IPR003190">
    <property type="entry name" value="Asp_decarbox"/>
</dbReference>
<dbReference type="NCBIfam" id="TIGR00223">
    <property type="entry name" value="panD"/>
    <property type="match status" value="1"/>
</dbReference>
<dbReference type="PANTHER" id="PTHR21012">
    <property type="entry name" value="ASPARTATE 1-DECARBOXYLASE"/>
    <property type="match status" value="1"/>
</dbReference>
<dbReference type="PANTHER" id="PTHR21012:SF0">
    <property type="entry name" value="ASPARTATE 1-DECARBOXYLASE"/>
    <property type="match status" value="1"/>
</dbReference>
<dbReference type="Pfam" id="PF02261">
    <property type="entry name" value="Asp_decarbox"/>
    <property type="match status" value="1"/>
</dbReference>
<dbReference type="PIRSF" id="PIRSF006246">
    <property type="entry name" value="Asp_decarbox"/>
    <property type="match status" value="1"/>
</dbReference>
<dbReference type="SUPFAM" id="SSF50692">
    <property type="entry name" value="ADC-like"/>
    <property type="match status" value="1"/>
</dbReference>
<sequence>MLRTMMKSKIHRATVTHADLHYVGSVTVDQDLLDAADLLEGEQVCIVDIDNGARLETYVIAGERGSGVIGINGAAAHLVHPGDLVILIAYGMMNEQEIAEYDPKVVFVDERNRPVELGSDPAHAPEGSGLTSPRSLTFA</sequence>